<keyword id="KW-0560">Oxidoreductase</keyword>
<keyword id="KW-0663">Pyridoxal phosphate</keyword>
<feature type="chain" id="PRO_0000166945" description="Glycine dehydrogenase (decarboxylating)">
    <location>
        <begin position="1"/>
        <end position="954"/>
    </location>
</feature>
<feature type="modified residue" description="N6-(pyridoxal phosphate)lysine" evidence="1">
    <location>
        <position position="704"/>
    </location>
</feature>
<gene>
    <name evidence="1" type="primary">gcvP</name>
    <name type="ordered locus">VPA0801</name>
</gene>
<accession>Q87I05</accession>
<name>GCSP_VIBPA</name>
<dbReference type="EC" id="1.4.4.2" evidence="1"/>
<dbReference type="EMBL" id="BA000032">
    <property type="protein sequence ID" value="BAC62144.1"/>
    <property type="molecule type" value="Genomic_DNA"/>
</dbReference>
<dbReference type="RefSeq" id="NP_800311.1">
    <property type="nucleotide sequence ID" value="NC_004605.1"/>
</dbReference>
<dbReference type="RefSeq" id="WP_005478418.1">
    <property type="nucleotide sequence ID" value="NC_004605.1"/>
</dbReference>
<dbReference type="SMR" id="Q87I05"/>
<dbReference type="GeneID" id="1191490"/>
<dbReference type="KEGG" id="vpa:VPA0801"/>
<dbReference type="PATRIC" id="fig|223926.6.peg.3732"/>
<dbReference type="eggNOG" id="COG0403">
    <property type="taxonomic scope" value="Bacteria"/>
</dbReference>
<dbReference type="eggNOG" id="COG1003">
    <property type="taxonomic scope" value="Bacteria"/>
</dbReference>
<dbReference type="HOGENOM" id="CLU_004620_1_1_6"/>
<dbReference type="Proteomes" id="UP000002493">
    <property type="component" value="Chromosome 2"/>
</dbReference>
<dbReference type="GO" id="GO:0005829">
    <property type="term" value="C:cytosol"/>
    <property type="evidence" value="ECO:0007669"/>
    <property type="project" value="TreeGrafter"/>
</dbReference>
<dbReference type="GO" id="GO:0005960">
    <property type="term" value="C:glycine cleavage complex"/>
    <property type="evidence" value="ECO:0007669"/>
    <property type="project" value="TreeGrafter"/>
</dbReference>
<dbReference type="GO" id="GO:0016594">
    <property type="term" value="F:glycine binding"/>
    <property type="evidence" value="ECO:0007669"/>
    <property type="project" value="TreeGrafter"/>
</dbReference>
<dbReference type="GO" id="GO:0004375">
    <property type="term" value="F:glycine dehydrogenase (decarboxylating) activity"/>
    <property type="evidence" value="ECO:0007669"/>
    <property type="project" value="UniProtKB-EC"/>
</dbReference>
<dbReference type="GO" id="GO:0030170">
    <property type="term" value="F:pyridoxal phosphate binding"/>
    <property type="evidence" value="ECO:0007669"/>
    <property type="project" value="TreeGrafter"/>
</dbReference>
<dbReference type="GO" id="GO:0019464">
    <property type="term" value="P:glycine decarboxylation via glycine cleavage system"/>
    <property type="evidence" value="ECO:0007669"/>
    <property type="project" value="UniProtKB-UniRule"/>
</dbReference>
<dbReference type="CDD" id="cd00613">
    <property type="entry name" value="GDC-P"/>
    <property type="match status" value="2"/>
</dbReference>
<dbReference type="FunFam" id="3.40.640.10:FF:000005">
    <property type="entry name" value="Glycine dehydrogenase (decarboxylating), mitochondrial"/>
    <property type="match status" value="1"/>
</dbReference>
<dbReference type="FunFam" id="3.90.1150.10:FF:000007">
    <property type="entry name" value="Glycine dehydrogenase (decarboxylating), mitochondrial"/>
    <property type="match status" value="1"/>
</dbReference>
<dbReference type="FunFam" id="3.40.640.10:FF:000007">
    <property type="entry name" value="glycine dehydrogenase (Decarboxylating), mitochondrial"/>
    <property type="match status" value="1"/>
</dbReference>
<dbReference type="Gene3D" id="3.90.1150.10">
    <property type="entry name" value="Aspartate Aminotransferase, domain 1"/>
    <property type="match status" value="2"/>
</dbReference>
<dbReference type="Gene3D" id="3.40.640.10">
    <property type="entry name" value="Type I PLP-dependent aspartate aminotransferase-like (Major domain)"/>
    <property type="match status" value="2"/>
</dbReference>
<dbReference type="HAMAP" id="MF_00711">
    <property type="entry name" value="GcvP"/>
    <property type="match status" value="1"/>
</dbReference>
<dbReference type="InterPro" id="IPR003437">
    <property type="entry name" value="GcvP"/>
</dbReference>
<dbReference type="InterPro" id="IPR049316">
    <property type="entry name" value="GDC-P_C"/>
</dbReference>
<dbReference type="InterPro" id="IPR049315">
    <property type="entry name" value="GDC-P_N"/>
</dbReference>
<dbReference type="InterPro" id="IPR020581">
    <property type="entry name" value="GDC_P"/>
</dbReference>
<dbReference type="InterPro" id="IPR015424">
    <property type="entry name" value="PyrdxlP-dep_Trfase"/>
</dbReference>
<dbReference type="InterPro" id="IPR015421">
    <property type="entry name" value="PyrdxlP-dep_Trfase_major"/>
</dbReference>
<dbReference type="InterPro" id="IPR015422">
    <property type="entry name" value="PyrdxlP-dep_Trfase_small"/>
</dbReference>
<dbReference type="NCBIfam" id="TIGR00461">
    <property type="entry name" value="gcvP"/>
    <property type="match status" value="1"/>
</dbReference>
<dbReference type="PANTHER" id="PTHR11773:SF13">
    <property type="entry name" value="GLYCINE DEHYDROGENASE (DECARBOXYLATING)"/>
    <property type="match status" value="1"/>
</dbReference>
<dbReference type="PANTHER" id="PTHR11773">
    <property type="entry name" value="GLYCINE DEHYDROGENASE, DECARBOXYLATING"/>
    <property type="match status" value="1"/>
</dbReference>
<dbReference type="Pfam" id="PF21478">
    <property type="entry name" value="GcvP2_C"/>
    <property type="match status" value="1"/>
</dbReference>
<dbReference type="Pfam" id="PF02347">
    <property type="entry name" value="GDC-P"/>
    <property type="match status" value="2"/>
</dbReference>
<dbReference type="SUPFAM" id="SSF53383">
    <property type="entry name" value="PLP-dependent transferases"/>
    <property type="match status" value="2"/>
</dbReference>
<organism>
    <name type="scientific">Vibrio parahaemolyticus serotype O3:K6 (strain RIMD 2210633)</name>
    <dbReference type="NCBI Taxonomy" id="223926"/>
    <lineage>
        <taxon>Bacteria</taxon>
        <taxon>Pseudomonadati</taxon>
        <taxon>Pseudomonadota</taxon>
        <taxon>Gammaproteobacteria</taxon>
        <taxon>Vibrionales</taxon>
        <taxon>Vibrionaceae</taxon>
        <taxon>Vibrio</taxon>
    </lineage>
</organism>
<evidence type="ECO:0000255" key="1">
    <source>
        <dbReference type="HAMAP-Rule" id="MF_00711"/>
    </source>
</evidence>
<comment type="function">
    <text evidence="1">The glycine cleavage system catalyzes the degradation of glycine. The P protein binds the alpha-amino group of glycine through its pyridoxal phosphate cofactor; CO(2) is released and the remaining methylamine moiety is then transferred to the lipoamide cofactor of the H protein.</text>
</comment>
<comment type="catalytic activity">
    <reaction evidence="1">
        <text>N(6)-[(R)-lipoyl]-L-lysyl-[glycine-cleavage complex H protein] + glycine + H(+) = N(6)-[(R)-S(8)-aminomethyldihydrolipoyl]-L-lysyl-[glycine-cleavage complex H protein] + CO2</text>
        <dbReference type="Rhea" id="RHEA:24304"/>
        <dbReference type="Rhea" id="RHEA-COMP:10494"/>
        <dbReference type="Rhea" id="RHEA-COMP:10495"/>
        <dbReference type="ChEBI" id="CHEBI:15378"/>
        <dbReference type="ChEBI" id="CHEBI:16526"/>
        <dbReference type="ChEBI" id="CHEBI:57305"/>
        <dbReference type="ChEBI" id="CHEBI:83099"/>
        <dbReference type="ChEBI" id="CHEBI:83143"/>
        <dbReference type="EC" id="1.4.4.2"/>
    </reaction>
</comment>
<comment type="cofactor">
    <cofactor evidence="1">
        <name>pyridoxal 5'-phosphate</name>
        <dbReference type="ChEBI" id="CHEBI:597326"/>
    </cofactor>
</comment>
<comment type="subunit">
    <text evidence="1">The glycine cleavage system is composed of four proteins: P, T, L and H.</text>
</comment>
<comment type="similarity">
    <text evidence="1">Belongs to the GcvP family.</text>
</comment>
<sequence>MTELLQSLSTQNEFVGRHNGPKLSDQQKMLEAINAVSLDALISETVPANIRLEQPMTLAEAKSEADMLATMKQFAKQNQVKRTFIGQGYYNTFTPNVILRNVLENPGWYTAYTPYQPEISQGRLESLLNFQQMVIDLTGMEIANASLLDEATAAAEAMTLCKRAGKSKSNVFFVADDVHPQTIEVVKTRAKFIGFEVLVGSLESLPEQDVFGALVQYPSTTGEVRDLTDIIAKAQANKTLVTVATDLLACTLLKPAGEMGADVAIGSAQRFGVPMGYGGPHAAFMATRDKHKRTMPGRVIGVSIDAKGNQALRMAMQTREQHIRREKATSNICTAQALLANMASFYAVYHGAEGLRTIARRTHHMTAILAAGLTKGGFELAHNSFFDTITINTGEKTQDLYTKALAADINLRVLPGKLGISLDETTTVADVEALFAIFGVKEDVTALSTEVAGNEFAAIPEALRRTSEYLTHPVFNTYHSETQMMRYLKQLENKDFSLTHGMIPLGSCTMKLNAAAEMIPITWPEFGSIHPFAPAEQAAGYAALAKDLKEKLCEITGYDAFSLQPNSGASGEYAGLIAIQRYHESRGEGHRNVCLIPSSAHGTNPATASMVSMKVVVVKCDDEGNIDIDDLAAKIEKHKDNLSSIMITYPSTHGVYEEKVKEVCEMVHAAGGQVYLDGANMNAQVGLTSPGFIGSDVSHLNLHKTFCIPHGGGGPGMGPIGVKSHLAPFLPGHIENGVEGEDFAVSAADFGSASILPISWAYIAMMGEAGLSNATKVAILNANYVMERLRPHYPVLYRGKNGRVAHECIIDIRPLKEETGISEEDIAKRLMDYGFHAPTMSFPVAGTLMVEPTESEDLAELNRFCDAMISIREEMTKVKNGEWPLENNPLVNAPHTQVDLSAEEWDRPYSRELGCFPSKATKSWKYWPTVNRVDNVYGDRNLICSCPSIDNYED</sequence>
<protein>
    <recommendedName>
        <fullName evidence="1">Glycine dehydrogenase (decarboxylating)</fullName>
        <ecNumber evidence="1">1.4.4.2</ecNumber>
    </recommendedName>
    <alternativeName>
        <fullName evidence="1">Glycine cleavage system P-protein</fullName>
    </alternativeName>
    <alternativeName>
        <fullName evidence="1">Glycine decarboxylase</fullName>
    </alternativeName>
    <alternativeName>
        <fullName evidence="1">Glycine dehydrogenase (aminomethyl-transferring)</fullName>
    </alternativeName>
</protein>
<proteinExistence type="inferred from homology"/>
<reference key="1">
    <citation type="journal article" date="2003" name="Lancet">
        <title>Genome sequence of Vibrio parahaemolyticus: a pathogenic mechanism distinct from that of V. cholerae.</title>
        <authorList>
            <person name="Makino K."/>
            <person name="Oshima K."/>
            <person name="Kurokawa K."/>
            <person name="Yokoyama K."/>
            <person name="Uda T."/>
            <person name="Tagomori K."/>
            <person name="Iijima Y."/>
            <person name="Najima M."/>
            <person name="Nakano M."/>
            <person name="Yamashita A."/>
            <person name="Kubota Y."/>
            <person name="Kimura S."/>
            <person name="Yasunaga T."/>
            <person name="Honda T."/>
            <person name="Shinagawa H."/>
            <person name="Hattori M."/>
            <person name="Iida T."/>
        </authorList>
    </citation>
    <scope>NUCLEOTIDE SEQUENCE [LARGE SCALE GENOMIC DNA]</scope>
    <source>
        <strain>RIMD 2210633</strain>
    </source>
</reference>